<sequence>MSSLKKILGLKGKGKKSKKLGIAPPPYEEDTSMEYAPSAPIDKSYFGVDEMDTHDPNQLRYEKFFFTVKMTVRSNRPFRTYSDVAAAVSHWDHMYIGMAGKRPFYKILAFLGSSNLKATPAVLADQGQPEYHAHCEGRAYLPHRMGKTPPMLNVPEHFRRPFNIGLYKGTIELTMTIYDDESLEAAPMIWDHFNSSKFSDFREKALMFGLIVEKKASGAWVLDSVSHFK</sequence>
<reference key="1">
    <citation type="journal article" date="2002" name="J. Gen. Virol.">
        <title>Full-length genome analysis of natural isolates of vesicular stomatitis virus (Indiana 1 serotype) from North, Central and South America.</title>
        <authorList>
            <person name="Rodriguez L.L."/>
            <person name="Pauszek S.J."/>
            <person name="Bunch T.A."/>
            <person name="Schumann K.R."/>
        </authorList>
    </citation>
    <scope>NUCLEOTIDE SEQUENCE [GENOMIC RNA]</scope>
</reference>
<evidence type="ECO:0000250" key="1">
    <source>
        <dbReference type="UniProtKB" id="P03519"/>
    </source>
</evidence>
<evidence type="ECO:0000250" key="2">
    <source>
        <dbReference type="UniProtKB" id="P08325"/>
    </source>
</evidence>
<evidence type="ECO:0000256" key="3">
    <source>
        <dbReference type="SAM" id="MobiDB-lite"/>
    </source>
</evidence>
<evidence type="ECO:0000305" key="4"/>
<evidence type="ECO:0007829" key="5">
    <source>
        <dbReference type="PDB" id="4OWR"/>
    </source>
</evidence>
<gene>
    <name type="primary">M</name>
</gene>
<keyword id="KW-0002">3D-structure</keyword>
<keyword id="KW-0024">Alternative initiation</keyword>
<keyword id="KW-0053">Apoptosis</keyword>
<keyword id="KW-1262">Eukaryotic host gene expression shutoff by virus</keyword>
<keyword id="KW-1035">Host cytoplasm</keyword>
<keyword id="KW-1190">Host gene expression shutoff by virus</keyword>
<keyword id="KW-1043">Host membrane</keyword>
<keyword id="KW-1192">Host mRNA suppression by virus</keyword>
<keyword id="KW-1048">Host nucleus</keyword>
<keyword id="KW-0945">Host-virus interaction</keyword>
<keyword id="KW-1099">Inhibition of host mRNA nuclear export by virus</keyword>
<keyword id="KW-0472">Membrane</keyword>
<keyword id="KW-0597">Phosphoprotein</keyword>
<keyword id="KW-1198">Viral budding</keyword>
<keyword id="KW-1187">Viral budding via the host ESCRT complexes</keyword>
<keyword id="KW-0468">Viral matrix protein</keyword>
<keyword id="KW-1188">Viral release from host cell</keyword>
<keyword id="KW-0946">Virion</keyword>
<name>MATRX_VSIVS</name>
<organism>
    <name type="scientific">Vesicular stomatitis Indiana virus (strain 85CLB South America)</name>
    <name type="common">VSIV</name>
    <dbReference type="NCBI Taxonomy" id="434490"/>
    <lineage>
        <taxon>Viruses</taxon>
        <taxon>Riboviria</taxon>
        <taxon>Orthornavirae</taxon>
        <taxon>Negarnaviricota</taxon>
        <taxon>Haploviricotina</taxon>
        <taxon>Monjiviricetes</taxon>
        <taxon>Mononegavirales</taxon>
        <taxon>Rhabdoviridae</taxon>
        <taxon>Alpharhabdovirinae</taxon>
        <taxon>Vesiculovirus</taxon>
        <taxon>Vesiculovirus indiana</taxon>
    </lineage>
</organism>
<comment type="function">
    <text evidence="1">Forms a double layer around the helical nucleocapsid, the inner matrix layer binding to the N helix and the outer matrix layer binding to the envelope glycoprotein. Plays a major role in assembly and budding of virion, by recruiting cellular partners of the ESCRT complexes that play a key role in releasing the budding particle from the host membrane. Condensates the ribonucleocapsid core during virus assembly. Inhibits the host mRNA nuclear export thereby inducing the shut off of cellular transcription and preventing the interferon signaling and the establishment of antiviral state in infected cells. This shutoff presumably inhibits interferon signaling and thus establishment of antiviral state in virus infected cells. Induces cell-rounding, cytoskeleton disorganization and apoptosis in infected cell. Inhibits host transcription, possibly through interaction with host DNA repair factor IIH/TFIIH GTF2H5 subunit.</text>
</comment>
<comment type="subunit">
    <text evidence="1 2">Homomultimer. Interacts with viral nucleocapsid; this interaction contributes to the virion assembly (By similarity). Interacts with the viral envelope glycoprotein; this interaction contributes to the virion assembly (By similarity). Interacts with host RAE1-NUP98 complex. Interacts with host NEDD4 and TSG101. Interacts with host dynamin. Interacts with host NDUFAF4; the interaction inhibits viral propagation and is independent of interferon activation. Interacts with host GTF2H5; the interaction may inhibit host transcription (By similarity).</text>
</comment>
<comment type="interaction">
    <interactant intactId="EBI-40246273">
        <id>Q8B0H7</id>
    </interactant>
    <interactant intactId="EBI-1564678">
        <id>Q96J02</id>
        <label>ITCH</label>
    </interactant>
    <organismsDiffer>true</organismsDiffer>
    <experiments>2</experiments>
</comment>
<comment type="subcellular location">
    <subcellularLocation>
        <location evidence="1">Virion</location>
    </subcellularLocation>
    <subcellularLocation>
        <location evidence="1">Host endomembrane system</location>
        <topology evidence="1">Peripheral membrane protein</topology>
    </subcellularLocation>
    <subcellularLocation>
        <location evidence="1">Host nucleus membrane</location>
        <topology evidence="1">Peripheral membrane protein</topology>
    </subcellularLocation>
    <subcellularLocation>
        <location evidence="1">Host nucleus</location>
    </subcellularLocation>
    <subcellularLocation>
        <location evidence="1">Host cytoplasm</location>
    </subcellularLocation>
    <text evidence="1">In the virion, forms a double layer around the helical nucleocapsid, the inner matrix layer binding to the N helix and the outer matrix layer binding to the envelope glycoprotein. About 2480 copies of M are present in the virion.</text>
</comment>
<comment type="alternative products">
    <event type="alternative initiation"/>
    <isoform>
        <id>Q8B0H7-1</id>
        <name>M</name>
        <sequence type="displayed"/>
    </isoform>
    <isoform>
        <id>Q8B0H7-2</id>
        <name>M2</name>
        <sequence type="described" ref="VSP_025413"/>
    </isoform>
    <isoform>
        <id>Q8B0H7-3</id>
        <name>M3</name>
        <sequence type="described" ref="VSP_025412"/>
    </isoform>
</comment>
<comment type="domain">
    <text evidence="1">Late-budding domains (L domains) are short sequence motifs essential for viral particle budding. They recruit proteins of the host ESCRT machinery (Endosomal Sorting Complex Required for Transport) or ESCRT-associated proteins. M contains two overlapping L domains: a PPXY motif which interacts with the WW domain 3 of NEDD4 and a PTAP/PSAP motif, which interacts with the UEV domain of TSG101.</text>
</comment>
<comment type="PTM">
    <text evidence="1">Phosphorylated by host.</text>
</comment>
<comment type="biotechnology">
    <text>VSV is used as an oncolytic agent for cancer therapy, because of his wide host range, rapid replication and mild pathogenicity in humans. VSV used are mutated at M51R in their matrix protein. These mutated viruses cannot successfully infect normal cells, being unable to counteract the antiviral state induced by interferon-alpha in normal cells. Cancer cells are impeded with responsiveness to interferon, and then can be successfully infected and lysed by the virus.</text>
</comment>
<comment type="similarity">
    <text evidence="4">Belongs to the vesiculoviruses matrix protein family.</text>
</comment>
<accession>Q8B0H7</accession>
<dbReference type="EMBL" id="AF473865">
    <property type="protein sequence ID" value="AAN16987.1"/>
    <property type="molecule type" value="Genomic_RNA"/>
</dbReference>
<dbReference type="PDB" id="4OWR">
    <property type="method" value="X-ray"/>
    <property type="resolution" value="3.15 A"/>
    <property type="chains" value="C=44-229"/>
</dbReference>
<dbReference type="PDBsum" id="4OWR"/>
<dbReference type="SMR" id="Q8B0H7"/>
<dbReference type="IntAct" id="Q8B0H7">
    <property type="interactions" value="4"/>
</dbReference>
<dbReference type="EvolutionaryTrace" id="Q8B0H7"/>
<dbReference type="Proteomes" id="UP000007625">
    <property type="component" value="Genome"/>
</dbReference>
<dbReference type="GO" id="GO:0030430">
    <property type="term" value="C:host cell cytoplasm"/>
    <property type="evidence" value="ECO:0007669"/>
    <property type="project" value="UniProtKB-SubCell"/>
</dbReference>
<dbReference type="GO" id="GO:0044200">
    <property type="term" value="C:host cell nuclear membrane"/>
    <property type="evidence" value="ECO:0007669"/>
    <property type="project" value="UniProtKB-SubCell"/>
</dbReference>
<dbReference type="GO" id="GO:0016020">
    <property type="term" value="C:membrane"/>
    <property type="evidence" value="ECO:0007669"/>
    <property type="project" value="UniProtKB-KW"/>
</dbReference>
<dbReference type="GO" id="GO:0019031">
    <property type="term" value="C:viral envelope"/>
    <property type="evidence" value="ECO:0007669"/>
    <property type="project" value="InterPro"/>
</dbReference>
<dbReference type="GO" id="GO:0039660">
    <property type="term" value="F:structural constituent of virion"/>
    <property type="evidence" value="ECO:0007669"/>
    <property type="project" value="UniProtKB-KW"/>
</dbReference>
<dbReference type="GO" id="GO:0039522">
    <property type="term" value="P:symbiont-mediated suppression of host mRNA export from nucleus"/>
    <property type="evidence" value="ECO:0007669"/>
    <property type="project" value="UniProtKB-KW"/>
</dbReference>
<dbReference type="GO" id="GO:0039602">
    <property type="term" value="P:symbiont-mediated suppression of host transcription initiation from RNA polymerase II promoter"/>
    <property type="evidence" value="ECO:0000250"/>
    <property type="project" value="UniProtKB"/>
</dbReference>
<dbReference type="GO" id="GO:0039702">
    <property type="term" value="P:viral budding via host ESCRT complex"/>
    <property type="evidence" value="ECO:0007669"/>
    <property type="project" value="UniProtKB-KW"/>
</dbReference>
<dbReference type="FunFam" id="3.10.460.10:FF:000001">
    <property type="entry name" value="Matrix protein"/>
    <property type="match status" value="1"/>
</dbReference>
<dbReference type="Gene3D" id="3.10.460.10">
    <property type="entry name" value="VSV matrix protein"/>
    <property type="match status" value="1"/>
</dbReference>
<dbReference type="InterPro" id="IPR009397">
    <property type="entry name" value="Vesiculo_matrix"/>
</dbReference>
<dbReference type="InterPro" id="IPR036711">
    <property type="entry name" value="VSV_matrix_sf"/>
</dbReference>
<dbReference type="Pfam" id="PF06326">
    <property type="entry name" value="Vesiculo_matrix"/>
    <property type="match status" value="1"/>
</dbReference>
<dbReference type="SUPFAM" id="SSF75404">
    <property type="entry name" value="VSV matrix protein"/>
    <property type="match status" value="1"/>
</dbReference>
<proteinExistence type="evidence at protein level"/>
<organismHost>
    <name type="scientific">Aedes</name>
    <dbReference type="NCBI Taxonomy" id="7158"/>
</organismHost>
<organismHost>
    <name type="scientific">Bos taurus</name>
    <name type="common">Bovine</name>
    <dbReference type="NCBI Taxonomy" id="9913"/>
</organismHost>
<organismHost>
    <name type="scientific">Culicoides</name>
    <dbReference type="NCBI Taxonomy" id="58271"/>
</organismHost>
<organismHost>
    <name type="scientific">Equus asinus</name>
    <name type="common">Donkey</name>
    <name type="synonym">Equus africanus asinus</name>
    <dbReference type="NCBI Taxonomy" id="9793"/>
</organismHost>
<organismHost>
    <name type="scientific">Equus caballus</name>
    <name type="common">Horse</name>
    <dbReference type="NCBI Taxonomy" id="9796"/>
</organismHost>
<organismHost>
    <name type="scientific">Homo sapiens</name>
    <name type="common">Human</name>
    <dbReference type="NCBI Taxonomy" id="9606"/>
</organismHost>
<organismHost>
    <name type="scientific">Lutzomyia</name>
    <dbReference type="NCBI Taxonomy" id="252607"/>
</organismHost>
<organismHost>
    <name type="scientific">Musca domestica</name>
    <name type="common">House fly</name>
    <dbReference type="NCBI Taxonomy" id="7370"/>
</organismHost>
<organismHost>
    <name type="scientific">Simuliidae</name>
    <name type="common">black flies</name>
    <dbReference type="NCBI Taxonomy" id="7190"/>
</organismHost>
<organismHost>
    <name type="scientific">Sus scrofa</name>
    <name type="common">Pig</name>
    <dbReference type="NCBI Taxonomy" id="9823"/>
</organismHost>
<feature type="chain" id="PRO_0000287257" description="Matrix protein">
    <location>
        <begin position="1"/>
        <end position="229"/>
    </location>
</feature>
<feature type="region of interest" description="Disordered" evidence="3">
    <location>
        <begin position="1"/>
        <end position="23"/>
    </location>
</feature>
<feature type="short sequence motif" description="dynamin binding" evidence="1">
    <location>
        <begin position="2"/>
        <end position="4"/>
    </location>
</feature>
<feature type="short sequence motif" description="PPXY motif" evidence="1">
    <location>
        <begin position="24"/>
        <end position="27"/>
    </location>
</feature>
<feature type="short sequence motif" description="PTAP/PSAP motif" evidence="1">
    <location>
        <begin position="37"/>
        <end position="40"/>
    </location>
</feature>
<feature type="compositionally biased region" description="Low complexity" evidence="3">
    <location>
        <begin position="1"/>
        <end position="10"/>
    </location>
</feature>
<feature type="splice variant" id="VSP_025412" description="In isoform M3." evidence="4">
    <location>
        <begin position="1"/>
        <end position="50"/>
    </location>
</feature>
<feature type="splice variant" id="VSP_025413" description="In isoform M2." evidence="4">
    <location>
        <begin position="1"/>
        <end position="32"/>
    </location>
</feature>
<feature type="strand" evidence="5">
    <location>
        <begin position="60"/>
        <end position="76"/>
    </location>
</feature>
<feature type="helix" evidence="5">
    <location>
        <begin position="81"/>
        <end position="88"/>
    </location>
</feature>
<feature type="helix" evidence="5">
    <location>
        <begin position="89"/>
        <end position="92"/>
    </location>
</feature>
<feature type="helix" evidence="5">
    <location>
        <begin position="99"/>
        <end position="101"/>
    </location>
</feature>
<feature type="helix" evidence="5">
    <location>
        <begin position="102"/>
        <end position="115"/>
    </location>
</feature>
<feature type="strand" evidence="5">
    <location>
        <begin position="117"/>
        <end position="120"/>
    </location>
</feature>
<feature type="strand" evidence="5">
    <location>
        <begin position="130"/>
        <end position="143"/>
    </location>
</feature>
<feature type="strand" evidence="5">
    <location>
        <begin position="156"/>
        <end position="164"/>
    </location>
</feature>
<feature type="strand" evidence="5">
    <location>
        <begin position="167"/>
        <end position="179"/>
    </location>
</feature>
<feature type="helix" evidence="5">
    <location>
        <begin position="189"/>
        <end position="191"/>
    </location>
</feature>
<feature type="turn" evidence="5">
    <location>
        <begin position="194"/>
        <end position="197"/>
    </location>
</feature>
<feature type="helix" evidence="5">
    <location>
        <begin position="200"/>
        <end position="206"/>
    </location>
</feature>
<feature type="turn" evidence="5">
    <location>
        <begin position="207"/>
        <end position="209"/>
    </location>
</feature>
<feature type="strand" evidence="5">
    <location>
        <begin position="210"/>
        <end position="213"/>
    </location>
</feature>
<feature type="strand" evidence="5">
    <location>
        <begin position="216"/>
        <end position="219"/>
    </location>
</feature>
<feature type="strand" evidence="5">
    <location>
        <begin position="221"/>
        <end position="225"/>
    </location>
</feature>
<protein>
    <recommendedName>
        <fullName evidence="1">Matrix protein</fullName>
        <shortName evidence="1">M protein</shortName>
    </recommendedName>
</protein>